<gene>
    <name evidence="4" type="primary">MFS1</name>
    <name type="ORF">ARB_01027</name>
</gene>
<proteinExistence type="inferred from homology"/>
<organism>
    <name type="scientific">Arthroderma benhamiae (strain ATCC MYA-4681 / CBS 112371)</name>
    <name type="common">Trichophyton mentagrophytes</name>
    <dbReference type="NCBI Taxonomy" id="663331"/>
    <lineage>
        <taxon>Eukaryota</taxon>
        <taxon>Fungi</taxon>
        <taxon>Dikarya</taxon>
        <taxon>Ascomycota</taxon>
        <taxon>Pezizomycotina</taxon>
        <taxon>Eurotiomycetes</taxon>
        <taxon>Eurotiomycetidae</taxon>
        <taxon>Onygenales</taxon>
        <taxon>Arthrodermataceae</taxon>
        <taxon>Trichophyton</taxon>
    </lineage>
</organism>
<accession>D4AXV8</accession>
<reference key="1">
    <citation type="journal article" date="2011" name="Genome Biol.">
        <title>Comparative and functional genomics provide insights into the pathogenicity of dermatophytic fungi.</title>
        <authorList>
            <person name="Burmester A."/>
            <person name="Shelest E."/>
            <person name="Gloeckner G."/>
            <person name="Heddergott C."/>
            <person name="Schindler S."/>
            <person name="Staib P."/>
            <person name="Heidel A."/>
            <person name="Felder M."/>
            <person name="Petzold A."/>
            <person name="Szafranski K."/>
            <person name="Feuermann M."/>
            <person name="Pedruzzi I."/>
            <person name="Priebe S."/>
            <person name="Groth M."/>
            <person name="Winkler R."/>
            <person name="Li W."/>
            <person name="Kniemeyer O."/>
            <person name="Schroeckh V."/>
            <person name="Hertweck C."/>
            <person name="Hube B."/>
            <person name="White T.C."/>
            <person name="Platzer M."/>
            <person name="Guthke R."/>
            <person name="Heitman J."/>
            <person name="Woestemeyer J."/>
            <person name="Zipfel P.F."/>
            <person name="Monod M."/>
            <person name="Brakhage A.A."/>
        </authorList>
    </citation>
    <scope>NUCLEOTIDE SEQUENCE [LARGE SCALE GENOMIC DNA]</scope>
    <source>
        <strain>ATCC MYA-4681 / CBS 112371</strain>
    </source>
</reference>
<reference key="2">
    <citation type="journal article" date="2021" name="J. Fungi">
        <title>MFS1, a pleiotropic transporter in dermatophytes that plays a key role in their intrinsic resistance to chloramphenicol and fluconazole.</title>
        <authorList>
            <person name="Yamada T."/>
            <person name="Yaguchi T."/>
            <person name="Salamin K."/>
            <person name="Guenova E."/>
            <person name="Feuermann M."/>
            <person name="Monod M."/>
        </authorList>
    </citation>
    <scope>IDENTIFICATION</scope>
    <scope>FUNCTION</scope>
    <scope>DISRUPTION PHENOTYPE</scope>
</reference>
<dbReference type="EMBL" id="ABSU01000017">
    <property type="protein sequence ID" value="EFE32136.1"/>
    <property type="status" value="ALT_INIT"/>
    <property type="molecule type" value="Genomic_DNA"/>
</dbReference>
<dbReference type="RefSeq" id="XP_003012776.1">
    <property type="nucleotide sequence ID" value="XM_003012730.1"/>
</dbReference>
<dbReference type="SMR" id="D4AXV8"/>
<dbReference type="STRING" id="663331.D4AXV8"/>
<dbReference type="GlyCosmos" id="D4AXV8">
    <property type="glycosylation" value="2 sites, No reported glycans"/>
</dbReference>
<dbReference type="GeneID" id="9522854"/>
<dbReference type="KEGG" id="abe:ARB_01027"/>
<dbReference type="eggNOG" id="KOG0254">
    <property type="taxonomic scope" value="Eukaryota"/>
</dbReference>
<dbReference type="HOGENOM" id="CLU_000960_22_1_1"/>
<dbReference type="OrthoDB" id="10021397at2759"/>
<dbReference type="Proteomes" id="UP000008866">
    <property type="component" value="Unassembled WGS sequence"/>
</dbReference>
<dbReference type="GO" id="GO:0005886">
    <property type="term" value="C:plasma membrane"/>
    <property type="evidence" value="ECO:0007669"/>
    <property type="project" value="UniProtKB-SubCell"/>
</dbReference>
<dbReference type="GO" id="GO:0022857">
    <property type="term" value="F:transmembrane transporter activity"/>
    <property type="evidence" value="ECO:0007669"/>
    <property type="project" value="InterPro"/>
</dbReference>
<dbReference type="CDD" id="cd17502">
    <property type="entry name" value="MFS_Azr1_MDR_like"/>
    <property type="match status" value="1"/>
</dbReference>
<dbReference type="FunFam" id="1.20.1250.20:FF:000489">
    <property type="entry name" value="MFS general substrate transporter"/>
    <property type="match status" value="1"/>
</dbReference>
<dbReference type="FunFam" id="1.20.1250.20:FF:000196">
    <property type="entry name" value="MFS toxin efflux pump (AflT)"/>
    <property type="match status" value="1"/>
</dbReference>
<dbReference type="FunFam" id="1.20.1720.10:FF:000012">
    <property type="entry name" value="MFS toxin efflux pump (AflT)"/>
    <property type="match status" value="1"/>
</dbReference>
<dbReference type="Gene3D" id="1.20.1250.20">
    <property type="entry name" value="MFS general substrate transporter like domains"/>
    <property type="match status" value="1"/>
</dbReference>
<dbReference type="Gene3D" id="1.20.1720.10">
    <property type="entry name" value="Multidrug resistance protein D"/>
    <property type="match status" value="1"/>
</dbReference>
<dbReference type="InterPro" id="IPR011701">
    <property type="entry name" value="MFS"/>
</dbReference>
<dbReference type="InterPro" id="IPR020846">
    <property type="entry name" value="MFS_dom"/>
</dbReference>
<dbReference type="InterPro" id="IPR036259">
    <property type="entry name" value="MFS_trans_sf"/>
</dbReference>
<dbReference type="PANTHER" id="PTHR23501">
    <property type="entry name" value="MAJOR FACILITATOR SUPERFAMILY"/>
    <property type="match status" value="1"/>
</dbReference>
<dbReference type="PANTHER" id="PTHR23501:SF199">
    <property type="entry name" value="MFS EFFLUX TRANSPORTER INPD-RELATED"/>
    <property type="match status" value="1"/>
</dbReference>
<dbReference type="Pfam" id="PF07690">
    <property type="entry name" value="MFS_1"/>
    <property type="match status" value="1"/>
</dbReference>
<dbReference type="SUPFAM" id="SSF103473">
    <property type="entry name" value="MFS general substrate transporter"/>
    <property type="match status" value="1"/>
</dbReference>
<dbReference type="PROSITE" id="PS50850">
    <property type="entry name" value="MFS"/>
    <property type="match status" value="1"/>
</dbReference>
<evidence type="ECO:0000255" key="1"/>
<evidence type="ECO:0000255" key="2">
    <source>
        <dbReference type="PROSITE-ProRule" id="PRU00498"/>
    </source>
</evidence>
<evidence type="ECO:0000269" key="3">
    <source ref="2"/>
</evidence>
<evidence type="ECO:0000303" key="4">
    <source ref="2"/>
</evidence>
<evidence type="ECO:0000305" key="5"/>
<evidence type="ECO:0000305" key="6">
    <source ref="2"/>
</evidence>
<feature type="chain" id="PRO_0000454038" description="MFS-type efflux pump MFS1">
    <location>
        <begin position="1"/>
        <end position="536"/>
    </location>
</feature>
<feature type="transmembrane region" description="Helical" evidence="1">
    <location>
        <begin position="30"/>
        <end position="50"/>
    </location>
</feature>
<feature type="transmembrane region" description="Helical" evidence="1">
    <location>
        <begin position="80"/>
        <end position="100"/>
    </location>
</feature>
<feature type="transmembrane region" description="Helical" evidence="1">
    <location>
        <begin position="102"/>
        <end position="122"/>
    </location>
</feature>
<feature type="transmembrane region" description="Helical" evidence="1">
    <location>
        <begin position="133"/>
        <end position="153"/>
    </location>
</feature>
<feature type="transmembrane region" description="Helical" evidence="1">
    <location>
        <begin position="163"/>
        <end position="183"/>
    </location>
</feature>
<feature type="transmembrane region" description="Helical" evidence="1">
    <location>
        <begin position="191"/>
        <end position="211"/>
    </location>
</feature>
<feature type="transmembrane region" description="Helical" evidence="1">
    <location>
        <begin position="234"/>
        <end position="254"/>
    </location>
</feature>
<feature type="transmembrane region" description="Helical" evidence="1">
    <location>
        <begin position="264"/>
        <end position="284"/>
    </location>
</feature>
<feature type="transmembrane region" description="Helical" evidence="1">
    <location>
        <begin position="306"/>
        <end position="326"/>
    </location>
</feature>
<feature type="transmembrane region" description="Helical" evidence="1">
    <location>
        <begin position="342"/>
        <end position="362"/>
    </location>
</feature>
<feature type="transmembrane region" description="Helical" evidence="1">
    <location>
        <begin position="366"/>
        <end position="386"/>
    </location>
</feature>
<feature type="transmembrane region" description="Helical" evidence="1">
    <location>
        <begin position="400"/>
        <end position="420"/>
    </location>
</feature>
<feature type="transmembrane region" description="Helical" evidence="1">
    <location>
        <begin position="426"/>
        <end position="446"/>
    </location>
</feature>
<feature type="transmembrane region" description="Helical" evidence="1">
    <location>
        <begin position="503"/>
        <end position="523"/>
    </location>
</feature>
<feature type="glycosylation site" description="N-linked (GlcNAc...) asparagine" evidence="2">
    <location>
        <position position="123"/>
    </location>
</feature>
<feature type="glycosylation site" description="N-linked (GlcNAc...) asparagine" evidence="2">
    <location>
        <position position="221"/>
    </location>
</feature>
<protein>
    <recommendedName>
        <fullName evidence="4">MFS-type efflux pump MFS1</fullName>
    </recommendedName>
</protein>
<sequence>MTEKDTDGADGLTKAKSNAVSEDYETVNHVTGLKLAVIVTGLCLSVLLVALDNTIIATAIPKITDQFHALEDIGWYGSSYLLTICAFQLIFGKIYTFFPVKWVFLIAITIFEIGSAICGAAPNSTALIIGRAVAGIGSAGIFSGALIIIAYSIPLEKRPAYTGAIGGMYGIASVAGPLMGGAFTDHISWRWCFYINLPIGAVTILSILIFLKHPKQKLDNNQTWKARLLKLDPIGTAFFMPSIICLLLALQWGGTKYPWNNGRIIALFVVFAVLISGFIYFQIRGGDSATVPPRILKKRSIASGAFFLFTIGSAFFIMVYYLPIWFQAIKGASATSSGIMNIPMVLSLVVLSIASGITVTAIGYYAPLYYVSTVLTSIGAGLLTTFTTETSKGKWIGYQIIFGAGVGTGLQLSIIAAQAVLPLEDVAVGTVIMMFCQTLGGALFVSVGQNVFTNLLVKGVVNAAPGLDPQVVLRVGATQLKNMIPPQFLDGVQVAYNDALTKTWYVATALAALSVIGSVGMEWKSVKGKKIEPAAA</sequence>
<comment type="function">
    <text evidence="3">MFS-type efflux pump involved in the modulation susceptibility to azoles, including fluconazole, itraconazole, miconazole and voriconazole (Ref.2). Also confers increased resistance chloramphenicol and thiamphenicol, suggesting that it acts as a pleiotropic drug transporter with a broad substrate spectrum (Ref.2). Finally, increases the tolerance to cycloheximide when expressed in S.cerevisiae, but not in dermatophyte species (Ref.2).</text>
</comment>
<comment type="subcellular location">
    <subcellularLocation>
        <location evidence="6">Cell membrane</location>
        <topology evidence="1">Multi-pass membrane protein</topology>
    </subcellularLocation>
</comment>
<comment type="disruption phenotype">
    <text evidence="3">Leads to decreased tolerance to the azoles fluconazole, itraconazole, voriconaole, miconazole, as well as to the antibiotics chloramphenicol and thiamphenicol.</text>
</comment>
<comment type="similarity">
    <text evidence="5">Belongs to the major facilitator superfamily. TCR/Tet family.</text>
</comment>
<comment type="sequence caution" evidence="5">
    <conflict type="erroneous initiation">
        <sequence resource="EMBL-CDS" id="EFE32136"/>
    </conflict>
    <text>Extended N-terminus.</text>
</comment>
<name>MFS1_ARTBC</name>
<keyword id="KW-1003">Cell membrane</keyword>
<keyword id="KW-0325">Glycoprotein</keyword>
<keyword id="KW-0472">Membrane</keyword>
<keyword id="KW-1185">Reference proteome</keyword>
<keyword id="KW-0812">Transmembrane</keyword>
<keyword id="KW-1133">Transmembrane helix</keyword>
<keyword id="KW-0813">Transport</keyword>